<feature type="chain" id="PRO_0000440771" description="Flavonoid 3'-monooxygenase CYP75B4">
    <location>
        <begin position="1"/>
        <end position="535"/>
    </location>
</feature>
<feature type="transmembrane region" description="Helical" evidence="2">
    <location>
        <begin position="8"/>
        <end position="28"/>
    </location>
</feature>
<feature type="binding site" description="axial binding residue" evidence="1">
    <location>
        <position position="469"/>
    </location>
    <ligand>
        <name>heme</name>
        <dbReference type="ChEBI" id="CHEBI:30413"/>
    </ligand>
    <ligandPart>
        <name>Fe</name>
        <dbReference type="ChEBI" id="CHEBI:18248"/>
    </ligandPart>
</feature>
<sequence length="535" mass="58519">MEVAAMEISTSLLLTTVALSVIVCYALVFSRAGKARAPLPLPPGPRGWPVLGNLPQLGGKTHQTLHEMTKVYGPLIRLRFGSSDVVVAGSAPVAAQFLRTHDANFSSRPRNSGGEHMAYNGRDVVFGPYGPRWRAMRKICAVNLFSARALDDLRAFREREAVLMVRSLAEASAAPGSSSPAAVVLGKEVNVCTTNALSRAAVGRRVFAAGAGEGAREFKEIVLEVMEVGGVLNVGDFVPALRWLDPQGVVARMKKLHRRFDDMMNAIIAERRAGSLLKPTDSREEGKDLLGLLLAMVQEQEWLAAGEDDRITDTEIKALILNLFVAGTDTTSTIVEWTMAELIRHPDILKHAQEELDVVVGRDRLLSESDLSHLTFFHAIIKETFRLHPSTPLSLPRMASEECEIAGYRIPKGAELLVNVWGIARDPAIWPDPLEYKPSRFLPGGTHTDVDVKGNDFGLIPFGAGRRICAGLSWGLRMVTMTAATLVHAFDWQLPADQTPDKLNMDEAFTLLLQRAEPLVVHPVPRLLPSAYNIA</sequence>
<gene>
    <name evidence="4" type="primary">CYP75B4</name>
    <name evidence="7" type="ordered locus">Os10g0317900</name>
    <name evidence="6" type="ordered locus">LOC_Os10g16974</name>
    <name type="ORF">OSJNBb0079E01.10</name>
</gene>
<organism>
    <name type="scientific">Oryza sativa subsp. japonica</name>
    <name type="common">Rice</name>
    <dbReference type="NCBI Taxonomy" id="39947"/>
    <lineage>
        <taxon>Eukaryota</taxon>
        <taxon>Viridiplantae</taxon>
        <taxon>Streptophyta</taxon>
        <taxon>Embryophyta</taxon>
        <taxon>Tracheophyta</taxon>
        <taxon>Spermatophyta</taxon>
        <taxon>Magnoliopsida</taxon>
        <taxon>Liliopsida</taxon>
        <taxon>Poales</taxon>
        <taxon>Poaceae</taxon>
        <taxon>BOP clade</taxon>
        <taxon>Oryzoideae</taxon>
        <taxon>Oryzeae</taxon>
        <taxon>Oryzinae</taxon>
        <taxon>Oryza</taxon>
        <taxon>Oryza sativa</taxon>
    </lineage>
</organism>
<accession>Q8LM92</accession>
<protein>
    <recommendedName>
        <fullName evidence="5">Flavonoid 3'-monooxygenase CYP75B4</fullName>
        <ecNumber evidence="3">1.14.14.82</ecNumber>
    </recommendedName>
    <alternativeName>
        <fullName evidence="4">Chrysoeriol 5'-hydroxylase</fullName>
    </alternativeName>
    <alternativeName>
        <fullName evidence="4">Cytochrome P450 75B4</fullName>
    </alternativeName>
    <alternativeName>
        <fullName evidence="4">Flavonoid 3'-hydroxylase CYP75B4</fullName>
    </alternativeName>
</protein>
<keyword id="KW-0284">Flavonoid biosynthesis</keyword>
<keyword id="KW-0349">Heme</keyword>
<keyword id="KW-0408">Iron</keyword>
<keyword id="KW-0472">Membrane</keyword>
<keyword id="KW-0479">Metal-binding</keyword>
<keyword id="KW-0503">Monooxygenase</keyword>
<keyword id="KW-0521">NADP</keyword>
<keyword id="KW-0560">Oxidoreductase</keyword>
<keyword id="KW-1185">Reference proteome</keyword>
<keyword id="KW-0812">Transmembrane</keyword>
<keyword id="KW-1133">Transmembrane helix</keyword>
<proteinExistence type="evidence at transcript level"/>
<evidence type="ECO:0000250" key="1">
    <source>
        <dbReference type="UniProtKB" id="P04798"/>
    </source>
</evidence>
<evidence type="ECO:0000255" key="2"/>
<evidence type="ECO:0000269" key="3">
    <source>
    </source>
</evidence>
<evidence type="ECO:0000303" key="4">
    <source>
    </source>
</evidence>
<evidence type="ECO:0000305" key="5"/>
<evidence type="ECO:0000312" key="6">
    <source>
        <dbReference type="EMBL" id="ABG66003.1"/>
    </source>
</evidence>
<evidence type="ECO:0000312" key="7">
    <source>
        <dbReference type="EMBL" id="BAF26247.1"/>
    </source>
</evidence>
<dbReference type="EC" id="1.14.14.82" evidence="3"/>
<dbReference type="EMBL" id="AC119149">
    <property type="protein sequence ID" value="AAM74394.1"/>
    <property type="molecule type" value="Genomic_DNA"/>
</dbReference>
<dbReference type="EMBL" id="DP000086">
    <property type="protein sequence ID" value="ABG66003.1"/>
    <property type="molecule type" value="Genomic_DNA"/>
</dbReference>
<dbReference type="EMBL" id="AP008216">
    <property type="protein sequence ID" value="BAF26247.1"/>
    <property type="molecule type" value="Genomic_DNA"/>
</dbReference>
<dbReference type="EMBL" id="AP014966">
    <property type="protein sequence ID" value="BAT10298.1"/>
    <property type="molecule type" value="Genomic_DNA"/>
</dbReference>
<dbReference type="EMBL" id="AK070442">
    <property type="protein sequence ID" value="BAG91954.1"/>
    <property type="molecule type" value="mRNA"/>
</dbReference>
<dbReference type="SMR" id="Q8LM92"/>
<dbReference type="FunCoup" id="Q8LM92">
    <property type="interactions" value="667"/>
</dbReference>
<dbReference type="STRING" id="39947.Q8LM92"/>
<dbReference type="CarbonylDB" id="Q8LM92"/>
<dbReference type="PaxDb" id="39947-Q8LM92"/>
<dbReference type="EnsemblPlants" id="Os10t0317900-01">
    <property type="protein sequence ID" value="Os10t0317900-01"/>
    <property type="gene ID" value="Os10g0317900"/>
</dbReference>
<dbReference type="Gramene" id="Os10t0317900-01">
    <property type="protein sequence ID" value="Os10t0317900-01"/>
    <property type="gene ID" value="Os10g0317900"/>
</dbReference>
<dbReference type="KEGG" id="dosa:Os10g0317900"/>
<dbReference type="KEGG" id="osa:4348299"/>
<dbReference type="eggNOG" id="KOG0156">
    <property type="taxonomic scope" value="Eukaryota"/>
</dbReference>
<dbReference type="InParanoid" id="Q8LM92"/>
<dbReference type="OMA" id="HMAYNGR"/>
<dbReference type="OrthoDB" id="2789670at2759"/>
<dbReference type="BioCyc" id="MetaCyc:MONOMER-20525"/>
<dbReference type="BRENDA" id="1.14.14.82">
    <property type="organism ID" value="8948"/>
</dbReference>
<dbReference type="PlantReactome" id="R-OSA-1119322">
    <property type="pathway name" value="Leucodelphinidin biosynthesis"/>
</dbReference>
<dbReference type="PlantReactome" id="R-OSA-1119415">
    <property type="pathway name" value="Leucopelargonidin and leucocyanidin biosynthesis"/>
</dbReference>
<dbReference type="PlantReactome" id="R-OSA-9609573">
    <property type="pathway name" value="Tricin biosynthesis"/>
</dbReference>
<dbReference type="UniPathway" id="UPA00154"/>
<dbReference type="Proteomes" id="UP000000763">
    <property type="component" value="Chromosome 10"/>
</dbReference>
<dbReference type="Proteomes" id="UP000059680">
    <property type="component" value="Chromosome 10"/>
</dbReference>
<dbReference type="ExpressionAtlas" id="Q8LM92">
    <property type="expression patterns" value="baseline and differential"/>
</dbReference>
<dbReference type="GO" id="GO:0016020">
    <property type="term" value="C:membrane"/>
    <property type="evidence" value="ECO:0007669"/>
    <property type="project" value="UniProtKB-SubCell"/>
</dbReference>
<dbReference type="GO" id="GO:0016711">
    <property type="term" value="F:flavonoid 3'-monooxygenase activity"/>
    <property type="evidence" value="ECO:0007669"/>
    <property type="project" value="UniProtKB-EC"/>
</dbReference>
<dbReference type="GO" id="GO:0020037">
    <property type="term" value="F:heme binding"/>
    <property type="evidence" value="ECO:0007669"/>
    <property type="project" value="InterPro"/>
</dbReference>
<dbReference type="GO" id="GO:0005506">
    <property type="term" value="F:iron ion binding"/>
    <property type="evidence" value="ECO:0007669"/>
    <property type="project" value="InterPro"/>
</dbReference>
<dbReference type="GO" id="GO:0009813">
    <property type="term" value="P:flavonoid biosynthetic process"/>
    <property type="evidence" value="ECO:0007669"/>
    <property type="project" value="UniProtKB-UniPathway"/>
</dbReference>
<dbReference type="CDD" id="cd20657">
    <property type="entry name" value="CYP75"/>
    <property type="match status" value="1"/>
</dbReference>
<dbReference type="FunFam" id="1.10.630.10:FF:000056">
    <property type="entry name" value="Red aleurone1"/>
    <property type="match status" value="1"/>
</dbReference>
<dbReference type="Gene3D" id="1.10.630.10">
    <property type="entry name" value="Cytochrome P450"/>
    <property type="match status" value="1"/>
</dbReference>
<dbReference type="InterPro" id="IPR001128">
    <property type="entry name" value="Cyt_P450"/>
</dbReference>
<dbReference type="InterPro" id="IPR017972">
    <property type="entry name" value="Cyt_P450_CS"/>
</dbReference>
<dbReference type="InterPro" id="IPR002401">
    <property type="entry name" value="Cyt_P450_E_grp-I"/>
</dbReference>
<dbReference type="InterPro" id="IPR036396">
    <property type="entry name" value="Cyt_P450_sf"/>
</dbReference>
<dbReference type="PANTHER" id="PTHR47944">
    <property type="entry name" value="CYTOCHROME P450 98A9"/>
    <property type="match status" value="1"/>
</dbReference>
<dbReference type="PANTHER" id="PTHR47944:SF18">
    <property type="entry name" value="FLAVONOID 3'-MONOOXYGENASE"/>
    <property type="match status" value="1"/>
</dbReference>
<dbReference type="Pfam" id="PF00067">
    <property type="entry name" value="p450"/>
    <property type="match status" value="1"/>
</dbReference>
<dbReference type="PRINTS" id="PR00463">
    <property type="entry name" value="EP450I"/>
</dbReference>
<dbReference type="PRINTS" id="PR00385">
    <property type="entry name" value="P450"/>
</dbReference>
<dbReference type="SUPFAM" id="SSF48264">
    <property type="entry name" value="Cytochrome P450"/>
    <property type="match status" value="1"/>
</dbReference>
<dbReference type="PROSITE" id="PS00086">
    <property type="entry name" value="CYTOCHROME_P450"/>
    <property type="match status" value="1"/>
</dbReference>
<reference key="1">
    <citation type="journal article" date="2003" name="Science">
        <title>In-depth view of structure, activity, and evolution of rice chromosome 10.</title>
        <authorList>
            <person name="Yu Y."/>
            <person name="Rambo T."/>
            <person name="Currie J."/>
            <person name="Saski C."/>
            <person name="Kim H.-R."/>
            <person name="Collura K."/>
            <person name="Thompson S."/>
            <person name="Simmons J."/>
            <person name="Yang T.-J."/>
            <person name="Nah G."/>
            <person name="Patel A.J."/>
            <person name="Thurmond S."/>
            <person name="Henry D."/>
            <person name="Oates R."/>
            <person name="Palmer M."/>
            <person name="Pries G."/>
            <person name="Gibson J."/>
            <person name="Anderson H."/>
            <person name="Paradkar M."/>
            <person name="Crane L."/>
            <person name="Dale J."/>
            <person name="Carver M.B."/>
            <person name="Wood T."/>
            <person name="Frisch D."/>
            <person name="Engler F."/>
            <person name="Soderlund C."/>
            <person name="Palmer L.E."/>
            <person name="Teytelman L."/>
            <person name="Nascimento L."/>
            <person name="De la Bastide M."/>
            <person name="Spiegel L."/>
            <person name="Ware D."/>
            <person name="O'Shaughnessy A."/>
            <person name="Dike S."/>
            <person name="Dedhia N."/>
            <person name="Preston R."/>
            <person name="Huang E."/>
            <person name="Ferraro K."/>
            <person name="Kuit K."/>
            <person name="Miller B."/>
            <person name="Zutavern T."/>
            <person name="Katzenberger F."/>
            <person name="Muller S."/>
            <person name="Balija V."/>
            <person name="Martienssen R.A."/>
            <person name="Stein L."/>
            <person name="Minx P."/>
            <person name="Johnson D."/>
            <person name="Cordum H."/>
            <person name="Mardis E."/>
            <person name="Cheng Z."/>
            <person name="Jiang J."/>
            <person name="Wilson R."/>
            <person name="McCombie W.R."/>
            <person name="Wing R.A."/>
            <person name="Yuan Q."/>
            <person name="Ouyang S."/>
            <person name="Liu J."/>
            <person name="Jones K.M."/>
            <person name="Gansberger K."/>
            <person name="Moffat K."/>
            <person name="Hill J."/>
            <person name="Tsitrin T."/>
            <person name="Overton L."/>
            <person name="Bera J."/>
            <person name="Kim M."/>
            <person name="Jin S."/>
            <person name="Tallon L."/>
            <person name="Ciecko A."/>
            <person name="Pai G."/>
            <person name="Van Aken S."/>
            <person name="Utterback T."/>
            <person name="Reidmuller S."/>
            <person name="Bormann J."/>
            <person name="Feldblyum T."/>
            <person name="Hsiao J."/>
            <person name="Zismann V."/>
            <person name="Blunt S."/>
            <person name="de Vazeille A.R."/>
            <person name="Shaffer T."/>
            <person name="Koo H."/>
            <person name="Suh B."/>
            <person name="Yang Q."/>
            <person name="Haas B."/>
            <person name="Peterson J."/>
            <person name="Pertea M."/>
            <person name="Volfovsky N."/>
            <person name="Wortman J."/>
            <person name="White O."/>
            <person name="Salzberg S.L."/>
            <person name="Fraser C.M."/>
            <person name="Buell C.R."/>
            <person name="Messing J."/>
            <person name="Song R."/>
            <person name="Fuks G."/>
            <person name="Llaca V."/>
            <person name="Kovchak S."/>
            <person name="Young S."/>
            <person name="Bowers J.E."/>
            <person name="Paterson A.H."/>
            <person name="Johns M.A."/>
            <person name="Mao L."/>
            <person name="Pan H."/>
            <person name="Dean R.A."/>
        </authorList>
    </citation>
    <scope>NUCLEOTIDE SEQUENCE [LARGE SCALE GENOMIC DNA]</scope>
    <source>
        <strain>cv. Nipponbare</strain>
    </source>
</reference>
<reference key="2">
    <citation type="journal article" date="2005" name="Nature">
        <title>The map-based sequence of the rice genome.</title>
        <authorList>
            <consortium name="International rice genome sequencing project (IRGSP)"/>
        </authorList>
    </citation>
    <scope>NUCLEOTIDE SEQUENCE [LARGE SCALE GENOMIC DNA]</scope>
    <source>
        <strain>cv. Nipponbare</strain>
    </source>
</reference>
<reference key="3">
    <citation type="journal article" date="2008" name="Nucleic Acids Res.">
        <title>The rice annotation project database (RAP-DB): 2008 update.</title>
        <authorList>
            <consortium name="The rice annotation project (RAP)"/>
        </authorList>
    </citation>
    <scope>GENOME REANNOTATION</scope>
    <source>
        <strain>cv. Nipponbare</strain>
    </source>
</reference>
<reference key="4">
    <citation type="journal article" date="2013" name="Rice">
        <title>Improvement of the Oryza sativa Nipponbare reference genome using next generation sequence and optical map data.</title>
        <authorList>
            <person name="Kawahara Y."/>
            <person name="de la Bastide M."/>
            <person name="Hamilton J.P."/>
            <person name="Kanamori H."/>
            <person name="McCombie W.R."/>
            <person name="Ouyang S."/>
            <person name="Schwartz D.C."/>
            <person name="Tanaka T."/>
            <person name="Wu J."/>
            <person name="Zhou S."/>
            <person name="Childs K.L."/>
            <person name="Davidson R.M."/>
            <person name="Lin H."/>
            <person name="Quesada-Ocampo L."/>
            <person name="Vaillancourt B."/>
            <person name="Sakai H."/>
            <person name="Lee S.S."/>
            <person name="Kim J."/>
            <person name="Numa H."/>
            <person name="Itoh T."/>
            <person name="Buell C.R."/>
            <person name="Matsumoto T."/>
        </authorList>
    </citation>
    <scope>GENOME REANNOTATION</scope>
    <source>
        <strain>cv. Nipponbare</strain>
    </source>
</reference>
<reference key="5">
    <citation type="journal article" date="2003" name="Science">
        <title>Collection, mapping, and annotation of over 28,000 cDNA clones from japonica rice.</title>
        <authorList>
            <consortium name="The rice full-length cDNA consortium"/>
        </authorList>
    </citation>
    <scope>NUCLEOTIDE SEQUENCE [LARGE SCALE MRNA]</scope>
    <source>
        <strain>cv. Nipponbare</strain>
    </source>
</reference>
<reference key="6">
    <citation type="journal article" date="2015" name="Plant Physiol.">
        <title>Completion of tricin biosynthesis pathway in rice: cytochrome P450 75B4 is a unique chrysoeriol 5'-hydroxylase.</title>
        <authorList>
            <person name="Lam P.Y."/>
            <person name="Liu H."/>
            <person name="Lo C."/>
        </authorList>
    </citation>
    <scope>FUNCTION</scope>
</reference>
<name>C75B4_ORYSJ</name>
<comment type="function">
    <text evidence="3">Catalyzes the 3'-hydroxylation of the flavonoid B-ring to the 3',4'-hydroxylated state. Catalyzes in vitro 3'-hydroxylation of different flavonoids. Catalyzes the conversion of apigenin to luteolin, naringenin to eriodictyol, and kaempferol to quercetin. Possesses specific 5'-hydroxylase activity toward chrysoeriol (a 3'-methoxylated flavone) and is indispensable for tricin formation. Converts chrysoeriol to selgin, a precursor of tricin, suggesting that chrysoeriol, instead of tricetin, is an intermediate in tricin biosynthesis.</text>
</comment>
<comment type="catalytic activity">
    <reaction evidence="3">
        <text>a 3'-unsubstituted flavone + reduced [NADPH--hemoprotein reductase] + O2 = a 3'-hydroxyflavone + oxidized [NADPH--hemoprotein reductase] + H2O + H(+)</text>
        <dbReference type="Rhea" id="RHEA:16337"/>
        <dbReference type="Rhea" id="RHEA-COMP:11964"/>
        <dbReference type="Rhea" id="RHEA-COMP:11965"/>
        <dbReference type="ChEBI" id="CHEBI:15377"/>
        <dbReference type="ChEBI" id="CHEBI:15378"/>
        <dbReference type="ChEBI" id="CHEBI:15379"/>
        <dbReference type="ChEBI" id="CHEBI:27741"/>
        <dbReference type="ChEBI" id="CHEBI:57618"/>
        <dbReference type="ChEBI" id="CHEBI:58210"/>
        <dbReference type="ChEBI" id="CHEBI:138726"/>
        <dbReference type="EC" id="1.14.14.82"/>
    </reaction>
</comment>
<comment type="cofactor">
    <cofactor evidence="1">
        <name>heme</name>
        <dbReference type="ChEBI" id="CHEBI:30413"/>
    </cofactor>
</comment>
<comment type="pathway">
    <text evidence="5">Secondary metabolite biosynthesis; flavonoid biosynthesis.</text>
</comment>
<comment type="subcellular location">
    <subcellularLocation>
        <location evidence="5">Membrane</location>
        <topology evidence="2">Single-pass membrane protein</topology>
    </subcellularLocation>
</comment>
<comment type="similarity">
    <text evidence="5">Belongs to the cytochrome P450 family.</text>
</comment>